<dbReference type="EC" id="1.5.99.12" evidence="3"/>
<dbReference type="EMBL" id="AP004996">
    <property type="protein sequence ID" value="BAD17196.1"/>
    <property type="molecule type" value="Genomic_DNA"/>
</dbReference>
<dbReference type="EMBL" id="AP005797">
    <property type="protein sequence ID" value="BAD17609.1"/>
    <property type="molecule type" value="Genomic_DNA"/>
</dbReference>
<dbReference type="EMBL" id="AP014958">
    <property type="protein sequence ID" value="BAS77694.1"/>
    <property type="molecule type" value="Genomic_DNA"/>
</dbReference>
<dbReference type="EMBL" id="CM000139">
    <property type="protein sequence ID" value="EEE56570.1"/>
    <property type="status" value="ALT_SEQ"/>
    <property type="molecule type" value="Genomic_DNA"/>
</dbReference>
<dbReference type="SMR" id="Q6YW51"/>
<dbReference type="FunCoup" id="Q6YW51">
    <property type="interactions" value="112"/>
</dbReference>
<dbReference type="STRING" id="39947.Q6YW51"/>
<dbReference type="GlyCosmos" id="Q6YW51">
    <property type="glycosylation" value="3 sites, No reported glycans"/>
</dbReference>
<dbReference type="PaxDb" id="39947-Q6YW51"/>
<dbReference type="EnsemblPlants" id="Os02t0220000-00">
    <property type="protein sequence ID" value="Os02t0220000-00"/>
    <property type="gene ID" value="Os02g0220000"/>
</dbReference>
<dbReference type="GeneID" id="107275892"/>
<dbReference type="Gramene" id="Os02t0220000-00">
    <property type="protein sequence ID" value="Os02t0220000-00"/>
    <property type="gene ID" value="Os02g0220000"/>
</dbReference>
<dbReference type="KEGG" id="osa:107275892"/>
<dbReference type="eggNOG" id="KOG1231">
    <property type="taxonomic scope" value="Eukaryota"/>
</dbReference>
<dbReference type="HOGENOM" id="CLU_024955_1_0_1"/>
<dbReference type="InParanoid" id="Q6YW51"/>
<dbReference type="OMA" id="TAKWNSH"/>
<dbReference type="OrthoDB" id="415825at2759"/>
<dbReference type="Proteomes" id="UP000000763">
    <property type="component" value="Chromosome 2"/>
</dbReference>
<dbReference type="Proteomes" id="UP000007752">
    <property type="component" value="Chromosome 2"/>
</dbReference>
<dbReference type="Proteomes" id="UP000059680">
    <property type="component" value="Chromosome 2"/>
</dbReference>
<dbReference type="GO" id="GO:0005576">
    <property type="term" value="C:extracellular region"/>
    <property type="evidence" value="ECO:0007669"/>
    <property type="project" value="UniProtKB-SubCell"/>
</dbReference>
<dbReference type="GO" id="GO:0019139">
    <property type="term" value="F:cytokinin dehydrogenase activity"/>
    <property type="evidence" value="ECO:0007669"/>
    <property type="project" value="UniProtKB-EC"/>
</dbReference>
<dbReference type="GO" id="GO:0071949">
    <property type="term" value="F:FAD binding"/>
    <property type="evidence" value="ECO:0007669"/>
    <property type="project" value="InterPro"/>
</dbReference>
<dbReference type="GO" id="GO:0016491">
    <property type="term" value="F:oxidoreductase activity"/>
    <property type="evidence" value="ECO:0000318"/>
    <property type="project" value="GO_Central"/>
</dbReference>
<dbReference type="GO" id="GO:0009690">
    <property type="term" value="P:cytokinin metabolic process"/>
    <property type="evidence" value="ECO:0007669"/>
    <property type="project" value="InterPro"/>
</dbReference>
<dbReference type="Gene3D" id="3.30.465.10">
    <property type="match status" value="1"/>
</dbReference>
<dbReference type="Gene3D" id="3.40.462.10">
    <property type="entry name" value="FAD-linked oxidases, C-terminal domain"/>
    <property type="match status" value="1"/>
</dbReference>
<dbReference type="Gene3D" id="3.30.43.10">
    <property type="entry name" value="Uridine Diphospho-n-acetylenolpyruvylglucosamine Reductase, domain 2"/>
    <property type="match status" value="1"/>
</dbReference>
<dbReference type="InterPro" id="IPR016170">
    <property type="entry name" value="Cytok_DH_C_sf"/>
</dbReference>
<dbReference type="InterPro" id="IPR015345">
    <property type="entry name" value="Cytokinin_DH_FAD/cytokin-bd"/>
</dbReference>
<dbReference type="InterPro" id="IPR016166">
    <property type="entry name" value="FAD-bd_PCMH"/>
</dbReference>
<dbReference type="InterPro" id="IPR036318">
    <property type="entry name" value="FAD-bd_PCMH-like_sf"/>
</dbReference>
<dbReference type="InterPro" id="IPR016167">
    <property type="entry name" value="FAD-bd_PCMH_sub1"/>
</dbReference>
<dbReference type="InterPro" id="IPR016169">
    <property type="entry name" value="FAD-bd_PCMH_sub2"/>
</dbReference>
<dbReference type="InterPro" id="IPR016164">
    <property type="entry name" value="FAD-linked_Oxase-like_C"/>
</dbReference>
<dbReference type="InterPro" id="IPR050432">
    <property type="entry name" value="FAD-linked_Oxidoreductases_BP"/>
</dbReference>
<dbReference type="InterPro" id="IPR006094">
    <property type="entry name" value="Oxid_FAD_bind_N"/>
</dbReference>
<dbReference type="InterPro" id="IPR006093">
    <property type="entry name" value="Oxy_OxRdtase_FAD_BS"/>
</dbReference>
<dbReference type="PANTHER" id="PTHR13878:SF127">
    <property type="entry name" value="CYTOKININ DEHYDROGENASE 3"/>
    <property type="match status" value="1"/>
</dbReference>
<dbReference type="PANTHER" id="PTHR13878">
    <property type="entry name" value="GULONOLACTONE OXIDASE"/>
    <property type="match status" value="1"/>
</dbReference>
<dbReference type="Pfam" id="PF09265">
    <property type="entry name" value="Cytokin-bind"/>
    <property type="match status" value="1"/>
</dbReference>
<dbReference type="Pfam" id="PF01565">
    <property type="entry name" value="FAD_binding_4"/>
    <property type="match status" value="1"/>
</dbReference>
<dbReference type="SUPFAM" id="SSF56176">
    <property type="entry name" value="FAD-binding/transporter-associated domain-like"/>
    <property type="match status" value="1"/>
</dbReference>
<dbReference type="SUPFAM" id="SSF55103">
    <property type="entry name" value="FAD-linked oxidases, C-terminal domain"/>
    <property type="match status" value="1"/>
</dbReference>
<dbReference type="PROSITE" id="PS51387">
    <property type="entry name" value="FAD_PCMH"/>
    <property type="match status" value="1"/>
</dbReference>
<dbReference type="PROSITE" id="PS00862">
    <property type="entry name" value="OX2_COVAL_FAD"/>
    <property type="match status" value="1"/>
</dbReference>
<evidence type="ECO:0000250" key="1"/>
<evidence type="ECO:0000250" key="2">
    <source>
        <dbReference type="UniProtKB" id="Q6Z955"/>
    </source>
</evidence>
<evidence type="ECO:0000250" key="3">
    <source>
        <dbReference type="UniProtKB" id="Q8LNV6"/>
    </source>
</evidence>
<evidence type="ECO:0000250" key="4">
    <source>
        <dbReference type="UniProtKB" id="Q9T0N8"/>
    </source>
</evidence>
<evidence type="ECO:0000255" key="5"/>
<evidence type="ECO:0000255" key="6">
    <source>
        <dbReference type="PROSITE-ProRule" id="PRU00718"/>
    </source>
</evidence>
<evidence type="ECO:0000305" key="7"/>
<keyword id="KW-0274">FAD</keyword>
<keyword id="KW-0285">Flavoprotein</keyword>
<keyword id="KW-0325">Glycoprotein</keyword>
<keyword id="KW-0560">Oxidoreductase</keyword>
<keyword id="KW-1185">Reference proteome</keyword>
<keyword id="KW-0964">Secreted</keyword>
<keyword id="KW-0732">Signal</keyword>
<accession>Q6YW51</accession>
<accession>A0A0P0VGK9</accession>
<accession>B9F4B3</accession>
<sequence>MAARCSIAFMVMASCLSVVVSGGLPGDLFAHSVASKLRVDRDTTARASSDFGRIVAAAPEAVLHPATPAEIAELVRFSASSPSPFPVAPRGQGHSARGQSLAPGGVVVDMRALAARRGRVNVSAGGAGAAPYVDAGGEQLWADVLRATLEHGLAPRVWTDYLRITVAGTLSNAGIGGQAFRHGPQIANVLELDVITGRGDMVTCSRDKEPDLFFAVLGGLGQFGIITRARIGLEPAPKRVRWVRLAYSDVVTFTRDQELLISKRASEAGFDYVEGQVQLNRTLTEGPKSTPFFSRFDIDRLAGLASESVSGVIYFIEGAMYYNESTTASVDQKLTSVLEQLSFDKGFVFTKDVSYVQFLDRVREEERILRSIGMWDVPHPWLNLFVPQSRILDFDTGVLKGVFVGANPVGVILMYPMNRNMWDDRMTAVSGNDDMFYVVGLLRSAVVPGDVERLERENEAVLAFCDNEGIGCKQYLPHYASQDGWRSHFGAKWSRVTELKVKYDPYGILSPGQRIFSSLTPMALVAM</sequence>
<comment type="function">
    <text evidence="2">Catalyzes the oxidation of cytokinins, a family of N(6)-substituted adenine derivatives that are plant hormones, where the substituent is an isopentenyl group.</text>
</comment>
<comment type="catalytic activity">
    <reaction evidence="3">
        <text>N(6)-dimethylallyladenine + A + H2O = 3-methyl-2-butenal + adenine + AH2</text>
        <dbReference type="Rhea" id="RHEA:13625"/>
        <dbReference type="ChEBI" id="CHEBI:13193"/>
        <dbReference type="ChEBI" id="CHEBI:15377"/>
        <dbReference type="ChEBI" id="CHEBI:15825"/>
        <dbReference type="ChEBI" id="CHEBI:16708"/>
        <dbReference type="ChEBI" id="CHEBI:17499"/>
        <dbReference type="ChEBI" id="CHEBI:17660"/>
        <dbReference type="EC" id="1.5.99.12"/>
    </reaction>
</comment>
<comment type="cofactor">
    <cofactor evidence="3">
        <name>FAD</name>
        <dbReference type="ChEBI" id="CHEBI:57692"/>
    </cofactor>
</comment>
<comment type="subunit">
    <text evidence="1">Monomer.</text>
</comment>
<comment type="subcellular location">
    <subcellularLocation>
        <location evidence="1">Secreted</location>
        <location evidence="1">Extracellular space</location>
    </subcellularLocation>
</comment>
<comment type="similarity">
    <text evidence="7">Belongs to the oxygen-dependent FAD-linked oxidoreductase family.</text>
</comment>
<comment type="sequence caution" evidence="7">
    <conflict type="erroneous gene model prediction">
        <sequence resource="EMBL-CDS" id="EEE56570"/>
    </conflict>
</comment>
<feature type="signal peptide" evidence="5">
    <location>
        <begin position="1"/>
        <end position="22"/>
    </location>
</feature>
<feature type="chain" id="PRO_0000394209" description="Cytokinin dehydrogenase 6">
    <location>
        <begin position="23"/>
        <end position="527"/>
    </location>
</feature>
<feature type="domain" description="FAD-binding PCMH-type" evidence="6">
    <location>
        <begin position="55"/>
        <end position="236"/>
    </location>
</feature>
<feature type="binding site" evidence="4">
    <location>
        <position position="91"/>
    </location>
    <ligand>
        <name>FAD</name>
        <dbReference type="ChEBI" id="CHEBI:57692"/>
    </ligand>
</feature>
<feature type="binding site" evidence="4">
    <location>
        <position position="93"/>
    </location>
    <ligand>
        <name>FAD</name>
        <dbReference type="ChEBI" id="CHEBI:57692"/>
    </ligand>
</feature>
<feature type="binding site" evidence="4">
    <location>
        <position position="95"/>
    </location>
    <ligand>
        <name>FAD</name>
        <dbReference type="ChEBI" id="CHEBI:57692"/>
    </ligand>
</feature>
<feature type="binding site" evidence="4">
    <location>
        <position position="99"/>
    </location>
    <ligand>
        <name>FAD</name>
        <dbReference type="ChEBI" id="CHEBI:57692"/>
    </ligand>
</feature>
<feature type="binding site" evidence="4">
    <location>
        <position position="160"/>
    </location>
    <ligand>
        <name>FAD</name>
        <dbReference type="ChEBI" id="CHEBI:57692"/>
    </ligand>
</feature>
<feature type="binding site" evidence="4">
    <location>
        <position position="165"/>
    </location>
    <ligand>
        <name>FAD</name>
        <dbReference type="ChEBI" id="CHEBI:57692"/>
    </ligand>
</feature>
<feature type="binding site" evidence="4">
    <location>
        <position position="171"/>
    </location>
    <ligand>
        <name>FAD</name>
        <dbReference type="ChEBI" id="CHEBI:57692"/>
    </ligand>
</feature>
<feature type="binding site" evidence="4">
    <location>
        <position position="175"/>
    </location>
    <ligand>
        <name>FAD</name>
        <dbReference type="ChEBI" id="CHEBI:57692"/>
    </ligand>
</feature>
<feature type="binding site" evidence="4">
    <location>
        <position position="226"/>
    </location>
    <ligand>
        <name>FAD</name>
        <dbReference type="ChEBI" id="CHEBI:57692"/>
    </ligand>
</feature>
<feature type="binding site" evidence="4">
    <location>
        <position position="475"/>
    </location>
    <ligand>
        <name>FAD</name>
        <dbReference type="ChEBI" id="CHEBI:57692"/>
    </ligand>
</feature>
<feature type="binding site" evidence="4">
    <location>
        <position position="510"/>
    </location>
    <ligand>
        <name>FAD</name>
        <dbReference type="ChEBI" id="CHEBI:57692"/>
    </ligand>
</feature>
<feature type="binding site" evidence="4">
    <location>
        <position position="513"/>
    </location>
    <ligand>
        <name>FAD</name>
        <dbReference type="ChEBI" id="CHEBI:57692"/>
    </ligand>
</feature>
<feature type="modified residue" description="Pros-8alpha-FAD histidine" evidence="4">
    <location>
        <position position="94"/>
    </location>
</feature>
<feature type="glycosylation site" description="N-linked (GlcNAc...) asparagine" evidence="5">
    <location>
        <position position="121"/>
    </location>
</feature>
<feature type="glycosylation site" description="N-linked (GlcNAc...) asparagine" evidence="5">
    <location>
        <position position="280"/>
    </location>
</feature>
<feature type="glycosylation site" description="N-linked (GlcNAc...) asparagine" evidence="5">
    <location>
        <position position="323"/>
    </location>
</feature>
<gene>
    <name type="primary">CKX6</name>
    <name type="ordered locus">Os02g0220000</name>
    <name type="ordered locus">LOC_Os02g12770</name>
    <name type="ORF">B1131G07.3</name>
    <name type="ORF">OsJ_05919</name>
    <name type="ORF">P0027A02.32</name>
</gene>
<organism>
    <name type="scientific">Oryza sativa subsp. japonica</name>
    <name type="common">Rice</name>
    <dbReference type="NCBI Taxonomy" id="39947"/>
    <lineage>
        <taxon>Eukaryota</taxon>
        <taxon>Viridiplantae</taxon>
        <taxon>Streptophyta</taxon>
        <taxon>Embryophyta</taxon>
        <taxon>Tracheophyta</taxon>
        <taxon>Spermatophyta</taxon>
        <taxon>Magnoliopsida</taxon>
        <taxon>Liliopsida</taxon>
        <taxon>Poales</taxon>
        <taxon>Poaceae</taxon>
        <taxon>BOP clade</taxon>
        <taxon>Oryzoideae</taxon>
        <taxon>Oryzeae</taxon>
        <taxon>Oryzinae</taxon>
        <taxon>Oryza</taxon>
        <taxon>Oryza sativa</taxon>
    </lineage>
</organism>
<protein>
    <recommendedName>
        <fullName>Cytokinin dehydrogenase 6</fullName>
        <ecNumber evidence="3">1.5.99.12</ecNumber>
    </recommendedName>
    <alternativeName>
        <fullName>Cytokinin oxidase 6</fullName>
        <shortName>OsCKX6</shortName>
    </alternativeName>
</protein>
<reference key="1">
    <citation type="journal article" date="2005" name="Nature">
        <title>The map-based sequence of the rice genome.</title>
        <authorList>
            <consortium name="International rice genome sequencing project (IRGSP)"/>
        </authorList>
    </citation>
    <scope>NUCLEOTIDE SEQUENCE [LARGE SCALE GENOMIC DNA]</scope>
    <source>
        <strain>cv. Nipponbare</strain>
    </source>
</reference>
<reference key="2">
    <citation type="journal article" date="2013" name="Rice">
        <title>Improvement of the Oryza sativa Nipponbare reference genome using next generation sequence and optical map data.</title>
        <authorList>
            <person name="Kawahara Y."/>
            <person name="de la Bastide M."/>
            <person name="Hamilton J.P."/>
            <person name="Kanamori H."/>
            <person name="McCombie W.R."/>
            <person name="Ouyang S."/>
            <person name="Schwartz D.C."/>
            <person name="Tanaka T."/>
            <person name="Wu J."/>
            <person name="Zhou S."/>
            <person name="Childs K.L."/>
            <person name="Davidson R.M."/>
            <person name="Lin H."/>
            <person name="Quesada-Ocampo L."/>
            <person name="Vaillancourt B."/>
            <person name="Sakai H."/>
            <person name="Lee S.S."/>
            <person name="Kim J."/>
            <person name="Numa H."/>
            <person name="Itoh T."/>
            <person name="Buell C.R."/>
            <person name="Matsumoto T."/>
        </authorList>
    </citation>
    <scope>GENOME REANNOTATION</scope>
    <source>
        <strain>cv. Nipponbare</strain>
    </source>
</reference>
<reference key="3">
    <citation type="journal article" date="2005" name="PLoS Biol.">
        <title>The genomes of Oryza sativa: a history of duplications.</title>
        <authorList>
            <person name="Yu J."/>
            <person name="Wang J."/>
            <person name="Lin W."/>
            <person name="Li S."/>
            <person name="Li H."/>
            <person name="Zhou J."/>
            <person name="Ni P."/>
            <person name="Dong W."/>
            <person name="Hu S."/>
            <person name="Zeng C."/>
            <person name="Zhang J."/>
            <person name="Zhang Y."/>
            <person name="Li R."/>
            <person name="Xu Z."/>
            <person name="Li S."/>
            <person name="Li X."/>
            <person name="Zheng H."/>
            <person name="Cong L."/>
            <person name="Lin L."/>
            <person name="Yin J."/>
            <person name="Geng J."/>
            <person name="Li G."/>
            <person name="Shi J."/>
            <person name="Liu J."/>
            <person name="Lv H."/>
            <person name="Li J."/>
            <person name="Wang J."/>
            <person name="Deng Y."/>
            <person name="Ran L."/>
            <person name="Shi X."/>
            <person name="Wang X."/>
            <person name="Wu Q."/>
            <person name="Li C."/>
            <person name="Ren X."/>
            <person name="Wang J."/>
            <person name="Wang X."/>
            <person name="Li D."/>
            <person name="Liu D."/>
            <person name="Zhang X."/>
            <person name="Ji Z."/>
            <person name="Zhao W."/>
            <person name="Sun Y."/>
            <person name="Zhang Z."/>
            <person name="Bao J."/>
            <person name="Han Y."/>
            <person name="Dong L."/>
            <person name="Ji J."/>
            <person name="Chen P."/>
            <person name="Wu S."/>
            <person name="Liu J."/>
            <person name="Xiao Y."/>
            <person name="Bu D."/>
            <person name="Tan J."/>
            <person name="Yang L."/>
            <person name="Ye C."/>
            <person name="Zhang J."/>
            <person name="Xu J."/>
            <person name="Zhou Y."/>
            <person name="Yu Y."/>
            <person name="Zhang B."/>
            <person name="Zhuang S."/>
            <person name="Wei H."/>
            <person name="Liu B."/>
            <person name="Lei M."/>
            <person name="Yu H."/>
            <person name="Li Y."/>
            <person name="Xu H."/>
            <person name="Wei S."/>
            <person name="He X."/>
            <person name="Fang L."/>
            <person name="Zhang Z."/>
            <person name="Zhang Y."/>
            <person name="Huang X."/>
            <person name="Su Z."/>
            <person name="Tong W."/>
            <person name="Li J."/>
            <person name="Tong Z."/>
            <person name="Li S."/>
            <person name="Ye J."/>
            <person name="Wang L."/>
            <person name="Fang L."/>
            <person name="Lei T."/>
            <person name="Chen C.-S."/>
            <person name="Chen H.-C."/>
            <person name="Xu Z."/>
            <person name="Li H."/>
            <person name="Huang H."/>
            <person name="Zhang F."/>
            <person name="Xu H."/>
            <person name="Li N."/>
            <person name="Zhao C."/>
            <person name="Li S."/>
            <person name="Dong L."/>
            <person name="Huang Y."/>
            <person name="Li L."/>
            <person name="Xi Y."/>
            <person name="Qi Q."/>
            <person name="Li W."/>
            <person name="Zhang B."/>
            <person name="Hu W."/>
            <person name="Zhang Y."/>
            <person name="Tian X."/>
            <person name="Jiao Y."/>
            <person name="Liang X."/>
            <person name="Jin J."/>
            <person name="Gao L."/>
            <person name="Zheng W."/>
            <person name="Hao B."/>
            <person name="Liu S.-M."/>
            <person name="Wang W."/>
            <person name="Yuan L."/>
            <person name="Cao M."/>
            <person name="McDermott J."/>
            <person name="Samudrala R."/>
            <person name="Wang J."/>
            <person name="Wong G.K.-S."/>
            <person name="Yang H."/>
        </authorList>
    </citation>
    <scope>NUCLEOTIDE SEQUENCE [LARGE SCALE GENOMIC DNA]</scope>
    <source>
        <strain>cv. Nipponbare</strain>
    </source>
</reference>
<reference key="4">
    <citation type="journal article" date="2005" name="Science">
        <title>Cytokinin oxidase regulates rice grain production.</title>
        <authorList>
            <person name="Ashikari M."/>
            <person name="Sakakibara H."/>
            <person name="Lin S."/>
            <person name="Yamamoto T."/>
            <person name="Takashi T."/>
            <person name="Nishimura A."/>
            <person name="Angeles E.R."/>
            <person name="Qian Q."/>
            <person name="Kitano H."/>
            <person name="Matsuoka M."/>
        </authorList>
    </citation>
    <scope>GENE FAMILY</scope>
    <scope>NOMENCLATURE</scope>
    <source>
        <strain>cv. Koshihikari</strain>
    </source>
</reference>
<name>CKX6_ORYSJ</name>
<proteinExistence type="inferred from homology"/>